<organism>
    <name type="scientific">Drosophila mojavensis</name>
    <name type="common">Fruit fly</name>
    <dbReference type="NCBI Taxonomy" id="7230"/>
    <lineage>
        <taxon>Eukaryota</taxon>
        <taxon>Metazoa</taxon>
        <taxon>Ecdysozoa</taxon>
        <taxon>Arthropoda</taxon>
        <taxon>Hexapoda</taxon>
        <taxon>Insecta</taxon>
        <taxon>Pterygota</taxon>
        <taxon>Neoptera</taxon>
        <taxon>Endopterygota</taxon>
        <taxon>Diptera</taxon>
        <taxon>Brachycera</taxon>
        <taxon>Muscomorpha</taxon>
        <taxon>Ephydroidea</taxon>
        <taxon>Drosophilidae</taxon>
        <taxon>Drosophila</taxon>
    </lineage>
</organism>
<comment type="function">
    <text evidence="2">Required for cytoplasmic pre-assembly of axonemal dyneins, thereby playing a central role in motility in cilia and flagella. Involved in pre-assembly of dynein arm complexes in the cytoplasm before intraflagellar transport loads them for the ciliary compartment.</text>
</comment>
<comment type="subunit">
    <text evidence="2">Interacts with Pp1alpha-96A, Pp1-87B, Pp1-13C and flw.</text>
</comment>
<comment type="subcellular location">
    <subcellularLocation>
        <location evidence="2">Cytoplasm</location>
    </subcellularLocation>
</comment>
<comment type="similarity">
    <text evidence="2">Belongs to the PIH1 family. Kintoun subfamily.</text>
</comment>
<name>KTU_DROMO</name>
<sequence>MSASTRNKHSKIHGNEKLDISNDEFDRIRDALKNEEFRKLFFDYVDEIQDPENRKIYEEEITQLEKERGVDVTFIHPQPGFVIKTSIDGELKCFINIASCKVVERPNNEVSVNSQTGQKGLSWSIPLAQIPPRDDLDANNKLCKVYDVVFHPDALHLAKRNAQFRQCLIDTALDGVEREYHVNLDRANLKFPKLDYKGMARPSVLRTLSKNPTAEEKEPHPLEHMYPKKPEADAGQSKVLPMKTKVTAVPKFAVPKYCIKHSHDVDMAEYTDELDAKLQVTVPRALVVEIELPLLSSTADCHLDVTEKSVYLLSEKQGAKYKLKVDLPYTVNDKAGNARFDTDHRCLRITLPVVRSTPREERNLHDTVRNLSREDSGVELNSNGESPVEDEELVVELSEHNQENDSNAFPPTAVVSPRSFLKSNLHYLLPAQFNCNILDNVIVFVLHVTNVQPDSVQTLQQARSLHLQFASMGTGYYPTHYAFLMQLPDGVQPELRIDQVEVDTGDENVVLRLTMNEHCMLLPSYLAGTDSNDLKEYPVFGHQNNNNEKETEVEVAEMEKCDLVSEKSLQINMDHNDVEHALEVTIEPQENEAPLDSLELLHEHQQELQQLHHQKKLNKKQRKRNKKQRSLSESACEDLKLAQEHHEQPMDTLKLPHRKQRSYSECNESSLGSSCVQRGILKRFSRYGPHPSISDSCSSIDDCSSTYSCSVDAAGTGFSQSFGSIPEERGGDEAGLSESCKKTVRFNDHIMKQVFRLDSSILGQRKKNQKRRDCKLRAQQRRLSEGDSADYVEVDSTHGSGDQPAHKTAANAQYFKQHNNNHPHVKDNKKQSLHDSGLDLTNGSINNKNNHSNENATKRNEADAKNTMMFEMDDVDEEAQDAANI</sequence>
<keyword id="KW-0963">Cytoplasm</keyword>
<keyword id="KW-0597">Phosphoprotein</keyword>
<keyword id="KW-1185">Reference proteome</keyword>
<feature type="chain" id="PRO_0000365808" description="Protein kintoun">
    <location>
        <begin position="1"/>
        <end position="885"/>
    </location>
</feature>
<feature type="region of interest" description="Disordered" evidence="3">
    <location>
        <begin position="208"/>
        <end position="235"/>
    </location>
</feature>
<feature type="region of interest" description="Disordered" evidence="3">
    <location>
        <begin position="371"/>
        <end position="390"/>
    </location>
</feature>
<feature type="region of interest" description="Disordered" evidence="3">
    <location>
        <begin position="607"/>
        <end position="636"/>
    </location>
</feature>
<feature type="region of interest" description="Disordered" evidence="3">
    <location>
        <begin position="644"/>
        <end position="663"/>
    </location>
</feature>
<feature type="region of interest" description="Disordered" evidence="3">
    <location>
        <begin position="781"/>
        <end position="806"/>
    </location>
</feature>
<feature type="region of interest" description="Disordered" evidence="3">
    <location>
        <begin position="819"/>
        <end position="871"/>
    </location>
</feature>
<feature type="compositionally biased region" description="Basic and acidic residues" evidence="3">
    <location>
        <begin position="213"/>
        <end position="232"/>
    </location>
</feature>
<feature type="compositionally biased region" description="Basic residues" evidence="3">
    <location>
        <begin position="612"/>
        <end position="629"/>
    </location>
</feature>
<feature type="compositionally biased region" description="Basic and acidic residues" evidence="3">
    <location>
        <begin position="824"/>
        <end position="837"/>
    </location>
</feature>
<feature type="compositionally biased region" description="Low complexity" evidence="3">
    <location>
        <begin position="842"/>
        <end position="855"/>
    </location>
</feature>
<feature type="modified residue" description="Phosphoserine" evidence="1">
    <location>
        <position position="376"/>
    </location>
</feature>
<feature type="modified residue" description="Phosphoserine" evidence="1">
    <location>
        <position position="784"/>
    </location>
</feature>
<evidence type="ECO:0000250" key="1">
    <source>
        <dbReference type="UniProtKB" id="Q0E9G3"/>
    </source>
</evidence>
<evidence type="ECO:0000255" key="2">
    <source>
        <dbReference type="HAMAP-Rule" id="MF_03069"/>
    </source>
</evidence>
<evidence type="ECO:0000256" key="3">
    <source>
        <dbReference type="SAM" id="MobiDB-lite"/>
    </source>
</evidence>
<accession>B4KSY3</accession>
<dbReference type="EMBL" id="CH933808">
    <property type="protein sequence ID" value="EDW08480.1"/>
    <property type="molecule type" value="Genomic_DNA"/>
</dbReference>
<dbReference type="SMR" id="B4KSY3"/>
<dbReference type="FunCoup" id="B4KSY3">
    <property type="interactions" value="376"/>
</dbReference>
<dbReference type="EnsemblMetazoa" id="FBtr0427058">
    <property type="protein sequence ID" value="FBpp0384702"/>
    <property type="gene ID" value="FBgn0142289"/>
</dbReference>
<dbReference type="EnsemblMetazoa" id="XM_002004509.4">
    <property type="protein sequence ID" value="XP_002004545.2"/>
    <property type="gene ID" value="LOC6578637"/>
</dbReference>
<dbReference type="GeneID" id="6578637"/>
<dbReference type="KEGG" id="dmo:Dmoj_GI19552"/>
<dbReference type="eggNOG" id="KOG4356">
    <property type="taxonomic scope" value="Eukaryota"/>
</dbReference>
<dbReference type="HOGENOM" id="CLU_012715_0_0_1"/>
<dbReference type="InParanoid" id="B4KSY3"/>
<dbReference type="OMA" id="CFLNISK"/>
<dbReference type="OrthoDB" id="546764at2759"/>
<dbReference type="PhylomeDB" id="B4KSY3"/>
<dbReference type="Proteomes" id="UP000009192">
    <property type="component" value="Unassembled WGS sequence"/>
</dbReference>
<dbReference type="GO" id="GO:0005737">
    <property type="term" value="C:cytoplasm"/>
    <property type="evidence" value="ECO:0007669"/>
    <property type="project" value="UniProtKB-SubCell"/>
</dbReference>
<dbReference type="GO" id="GO:0008157">
    <property type="term" value="F:protein phosphatase 1 binding"/>
    <property type="evidence" value="ECO:0007669"/>
    <property type="project" value="EnsemblMetazoa"/>
</dbReference>
<dbReference type="GO" id="GO:0070286">
    <property type="term" value="P:axonemal dynein complex assembly"/>
    <property type="evidence" value="ECO:0007669"/>
    <property type="project" value="UniProtKB-UniRule"/>
</dbReference>
<dbReference type="GO" id="GO:0060285">
    <property type="term" value="P:cilium-dependent cell motility"/>
    <property type="evidence" value="ECO:0007669"/>
    <property type="project" value="UniProtKB-UniRule"/>
</dbReference>
<dbReference type="HAMAP" id="MF_03069">
    <property type="entry name" value="Kintoun"/>
    <property type="match status" value="1"/>
</dbReference>
<dbReference type="InterPro" id="IPR034727">
    <property type="entry name" value="Kintoun"/>
</dbReference>
<dbReference type="InterPro" id="IPR050734">
    <property type="entry name" value="PIH1/Kintoun_subfamily"/>
</dbReference>
<dbReference type="InterPro" id="IPR012981">
    <property type="entry name" value="PIH1_N"/>
</dbReference>
<dbReference type="InterPro" id="IPR041442">
    <property type="entry name" value="PIH1D1/2/3_CS-like"/>
</dbReference>
<dbReference type="PANTHER" id="PTHR22997">
    <property type="entry name" value="PIH1 DOMAIN-CONTAINING PROTEIN 1"/>
    <property type="match status" value="1"/>
</dbReference>
<dbReference type="PANTHER" id="PTHR22997:SF3">
    <property type="entry name" value="PROTEIN KINTOUN"/>
    <property type="match status" value="1"/>
</dbReference>
<dbReference type="Pfam" id="PF08190">
    <property type="entry name" value="PIH1"/>
    <property type="match status" value="1"/>
</dbReference>
<dbReference type="Pfam" id="PF18201">
    <property type="entry name" value="PIH1_CS"/>
    <property type="match status" value="1"/>
</dbReference>
<reference key="1">
    <citation type="journal article" date="2007" name="Nature">
        <title>Evolution of genes and genomes on the Drosophila phylogeny.</title>
        <authorList>
            <consortium name="Drosophila 12 genomes consortium"/>
        </authorList>
    </citation>
    <scope>NUCLEOTIDE SEQUENCE [LARGE SCALE GENOMIC DNA]</scope>
    <source>
        <strain>Tucson 15081-1352.22</strain>
    </source>
</reference>
<protein>
    <recommendedName>
        <fullName evidence="2">Protein kintoun</fullName>
    </recommendedName>
    <alternativeName>
        <fullName evidence="2">Dynein assembly factor 2, axonemal homolog</fullName>
    </alternativeName>
    <alternativeName>
        <fullName evidence="2">PP1-interacting protein 20</fullName>
    </alternativeName>
</protein>
<gene>
    <name evidence="2" type="primary">Nop17l</name>
    <name evidence="2" type="synonym">Ppi20</name>
    <name type="ORF">GI19552</name>
</gene>
<proteinExistence type="inferred from homology"/>